<evidence type="ECO:0000250" key="1">
    <source>
        <dbReference type="UniProtKB" id="C0HLR3"/>
    </source>
</evidence>
<evidence type="ECO:0000255" key="2">
    <source>
        <dbReference type="PROSITE-ProRule" id="PRU01210"/>
    </source>
</evidence>
<evidence type="ECO:0000269" key="3">
    <source>
    </source>
</evidence>
<evidence type="ECO:0000303" key="4">
    <source>
    </source>
</evidence>
<evidence type="ECO:0000305" key="5"/>
<evidence type="ECO:0000305" key="6">
    <source>
    </source>
</evidence>
<sequence length="66" mass="7551">KEGYIVNYYDGCKYACAKLGDNDYCLRECKARYGKGAGGYCYAFGCWCTHLYEQAVVWPLPKKKCN</sequence>
<comment type="function">
    <text evidence="1 3">Beta toxins bind voltage-independently at site-4 of sodium channels (Nav) and reduces peak current and shifts the voltage of activation toward more negative potentials thereby affecting sodium channel activation and promoting spontaneous and repetitive firing (By similarity). This toxin is moderately toxic to mice (PubMed:39057941).</text>
</comment>
<comment type="activity regulation">
    <text evidence="3">Is susceptible to be neutralized by human antibodies scFvs 10FG2 and HV.</text>
</comment>
<comment type="subcellular location">
    <subcellularLocation>
        <location evidence="3">Secreted</location>
    </subcellularLocation>
</comment>
<comment type="tissue specificity">
    <text evidence="6">Expressed by the venom gland.</text>
</comment>
<comment type="domain">
    <text evidence="5">Has the structural arrangement of an alpha-helix connected to antiparallel beta-sheets by disulfide bonds (CS-alpha/beta).</text>
</comment>
<comment type="mass spectrometry" mass="7542.1" method="Electrospray" evidence="3"/>
<comment type="similarity">
    <text evidence="5">Belongs to the long (4 C-C) scorpion toxin superfamily. Sodium channel inhibitor family. Beta subfamily.</text>
</comment>
<protein>
    <recommendedName>
        <fullName evidence="4 5">Beta-mammal toxin Cv5</fullName>
    </recommendedName>
</protein>
<feature type="chain" id="PRO_0000461637" description="Beta-mammal toxin Cv5" evidence="3">
    <location>
        <begin position="1"/>
        <end position="66"/>
    </location>
</feature>
<feature type="domain" description="LCN-type CS-alpha/beta" evidence="2">
    <location>
        <begin position="1"/>
        <end position="66"/>
    </location>
</feature>
<feature type="disulfide bond" evidence="2">
    <location>
        <begin position="12"/>
        <end position="65"/>
    </location>
</feature>
<feature type="disulfide bond" evidence="2">
    <location>
        <begin position="16"/>
        <end position="41"/>
    </location>
</feature>
<feature type="disulfide bond" evidence="2">
    <location>
        <begin position="25"/>
        <end position="46"/>
    </location>
</feature>
<feature type="disulfide bond" evidence="2">
    <location>
        <begin position="29"/>
        <end position="48"/>
    </location>
</feature>
<keyword id="KW-0903">Direct protein sequencing</keyword>
<keyword id="KW-1015">Disulfide bond</keyword>
<keyword id="KW-0872">Ion channel impairing toxin</keyword>
<keyword id="KW-0528">Neurotoxin</keyword>
<keyword id="KW-0964">Secreted</keyword>
<keyword id="KW-0800">Toxin</keyword>
<keyword id="KW-0738">Voltage-gated sodium channel impairing toxin</keyword>
<organism>
    <name type="scientific">Centruroides villegasi</name>
    <name type="common">Scorpion</name>
    <dbReference type="NCBI Taxonomy" id="3161195"/>
    <lineage>
        <taxon>Eukaryota</taxon>
        <taxon>Metazoa</taxon>
        <taxon>Ecdysozoa</taxon>
        <taxon>Arthropoda</taxon>
        <taxon>Chelicerata</taxon>
        <taxon>Arachnida</taxon>
        <taxon>Scorpiones</taxon>
        <taxon>Buthida</taxon>
        <taxon>Buthoidea</taxon>
        <taxon>Buthidae</taxon>
        <taxon>Centruroides</taxon>
    </lineage>
</organism>
<name>SCX5_CENVL</name>
<reference key="1">
    <citation type="journal article" date="2024" name="Toxins">
        <title>Toxic peptides from the Mexican scorpion Centruroides villegasi: chemical structure and evaluation of recognition by human single-chain antibodies.</title>
        <authorList>
            <person name="Riano-Umbarila L."/>
            <person name="Olamendi-Portugal T."/>
            <person name="Romero-Moreno J.A."/>
            <person name="Delgado-Prudencio G."/>
            <person name="Zamudio F.Z."/>
            <person name="Becerril B."/>
            <person name="Possani L.D."/>
        </authorList>
    </citation>
    <scope>PROTEIN SEQUENCE</scope>
    <scope>SUBCELLULAR LOCATION</scope>
    <scope>FUNCTION</scope>
    <scope>BIOASSAY</scope>
    <scope>MASS SPECTROMETRY</scope>
    <scope>ACTIVITY REGULATION</scope>
    <source>
        <tissue>Venom</tissue>
    </source>
</reference>
<proteinExistence type="evidence at protein level"/>
<accession>C0HMC2</accession>
<dbReference type="GO" id="GO:0005576">
    <property type="term" value="C:extracellular region"/>
    <property type="evidence" value="ECO:0007669"/>
    <property type="project" value="UniProtKB-SubCell"/>
</dbReference>
<dbReference type="GO" id="GO:0019871">
    <property type="term" value="F:sodium channel inhibitor activity"/>
    <property type="evidence" value="ECO:0007669"/>
    <property type="project" value="InterPro"/>
</dbReference>
<dbReference type="GO" id="GO:0090729">
    <property type="term" value="F:toxin activity"/>
    <property type="evidence" value="ECO:0007669"/>
    <property type="project" value="UniProtKB-KW"/>
</dbReference>
<dbReference type="GO" id="GO:0006952">
    <property type="term" value="P:defense response"/>
    <property type="evidence" value="ECO:0007669"/>
    <property type="project" value="InterPro"/>
</dbReference>
<dbReference type="CDD" id="cd23106">
    <property type="entry name" value="neurotoxins_LC_scorpion"/>
    <property type="match status" value="1"/>
</dbReference>
<dbReference type="FunFam" id="3.30.30.10:FF:000002">
    <property type="entry name" value="Alpha-like toxin BmK-M1"/>
    <property type="match status" value="1"/>
</dbReference>
<dbReference type="Gene3D" id="3.30.30.10">
    <property type="entry name" value="Knottin, scorpion toxin-like"/>
    <property type="match status" value="1"/>
</dbReference>
<dbReference type="InterPro" id="IPR044062">
    <property type="entry name" value="LCN-type_CS_alpha_beta_dom"/>
</dbReference>
<dbReference type="InterPro" id="IPR003614">
    <property type="entry name" value="Scorpion_toxin-like"/>
</dbReference>
<dbReference type="InterPro" id="IPR036574">
    <property type="entry name" value="Scorpion_toxin-like_sf"/>
</dbReference>
<dbReference type="InterPro" id="IPR018218">
    <property type="entry name" value="Scorpion_toxinL"/>
</dbReference>
<dbReference type="PRINTS" id="PR00285">
    <property type="entry name" value="SCORPNTOXIN"/>
</dbReference>
<dbReference type="SMART" id="SM00505">
    <property type="entry name" value="Knot1"/>
    <property type="match status" value="1"/>
</dbReference>
<dbReference type="SUPFAM" id="SSF57095">
    <property type="entry name" value="Scorpion toxin-like"/>
    <property type="match status" value="1"/>
</dbReference>
<dbReference type="PROSITE" id="PS51863">
    <property type="entry name" value="LCN_CSAB"/>
    <property type="match status" value="1"/>
</dbReference>